<dbReference type="EC" id="2.1.1.182" evidence="1"/>
<dbReference type="EMBL" id="CP000243">
    <property type="protein sequence ID" value="ABE05568.1"/>
    <property type="molecule type" value="Genomic_DNA"/>
</dbReference>
<dbReference type="RefSeq" id="WP_001065363.1">
    <property type="nucleotide sequence ID" value="NZ_CP064825.1"/>
</dbReference>
<dbReference type="SMR" id="Q1RGE6"/>
<dbReference type="KEGG" id="eci:UTI89_C0058"/>
<dbReference type="HOGENOM" id="CLU_041220_0_1_6"/>
<dbReference type="Proteomes" id="UP000001952">
    <property type="component" value="Chromosome"/>
</dbReference>
<dbReference type="GO" id="GO:0005829">
    <property type="term" value="C:cytosol"/>
    <property type="evidence" value="ECO:0007669"/>
    <property type="project" value="TreeGrafter"/>
</dbReference>
<dbReference type="GO" id="GO:0052908">
    <property type="term" value="F:16S rRNA (adenine(1518)-N(6)/adenine(1519)-N(6))-dimethyltransferase activity"/>
    <property type="evidence" value="ECO:0007669"/>
    <property type="project" value="UniProtKB-EC"/>
</dbReference>
<dbReference type="GO" id="GO:0003723">
    <property type="term" value="F:RNA binding"/>
    <property type="evidence" value="ECO:0007669"/>
    <property type="project" value="UniProtKB-KW"/>
</dbReference>
<dbReference type="FunFam" id="1.10.8.100:FF:000001">
    <property type="entry name" value="Ribosomal RNA small subunit methyltransferase A"/>
    <property type="match status" value="1"/>
</dbReference>
<dbReference type="FunFam" id="3.40.50.150:FF:000006">
    <property type="entry name" value="Ribosomal RNA small subunit methyltransferase A"/>
    <property type="match status" value="1"/>
</dbReference>
<dbReference type="Gene3D" id="1.10.8.100">
    <property type="entry name" value="Ribosomal RNA adenine dimethylase-like, domain 2"/>
    <property type="match status" value="1"/>
</dbReference>
<dbReference type="Gene3D" id="3.40.50.150">
    <property type="entry name" value="Vaccinia Virus protein VP39"/>
    <property type="match status" value="1"/>
</dbReference>
<dbReference type="HAMAP" id="MF_00607">
    <property type="entry name" value="16SrRNA_methyltr_A"/>
    <property type="match status" value="1"/>
</dbReference>
<dbReference type="InterPro" id="IPR001737">
    <property type="entry name" value="KsgA/Erm"/>
</dbReference>
<dbReference type="InterPro" id="IPR023165">
    <property type="entry name" value="rRNA_Ade_diMease-like_C"/>
</dbReference>
<dbReference type="InterPro" id="IPR020596">
    <property type="entry name" value="rRNA_Ade_Mease_Trfase_CS"/>
</dbReference>
<dbReference type="InterPro" id="IPR020598">
    <property type="entry name" value="rRNA_Ade_methylase_Trfase_N"/>
</dbReference>
<dbReference type="InterPro" id="IPR011530">
    <property type="entry name" value="rRNA_adenine_dimethylase"/>
</dbReference>
<dbReference type="InterPro" id="IPR029063">
    <property type="entry name" value="SAM-dependent_MTases_sf"/>
</dbReference>
<dbReference type="NCBIfam" id="TIGR00755">
    <property type="entry name" value="ksgA"/>
    <property type="match status" value="1"/>
</dbReference>
<dbReference type="PANTHER" id="PTHR11727">
    <property type="entry name" value="DIMETHYLADENOSINE TRANSFERASE"/>
    <property type="match status" value="1"/>
</dbReference>
<dbReference type="PANTHER" id="PTHR11727:SF7">
    <property type="entry name" value="DIMETHYLADENOSINE TRANSFERASE-RELATED"/>
    <property type="match status" value="1"/>
</dbReference>
<dbReference type="Pfam" id="PF00398">
    <property type="entry name" value="RrnaAD"/>
    <property type="match status" value="1"/>
</dbReference>
<dbReference type="SMART" id="SM00650">
    <property type="entry name" value="rADc"/>
    <property type="match status" value="1"/>
</dbReference>
<dbReference type="SUPFAM" id="SSF53335">
    <property type="entry name" value="S-adenosyl-L-methionine-dependent methyltransferases"/>
    <property type="match status" value="1"/>
</dbReference>
<dbReference type="PROSITE" id="PS01131">
    <property type="entry name" value="RRNA_A_DIMETH"/>
    <property type="match status" value="1"/>
</dbReference>
<dbReference type="PROSITE" id="PS51689">
    <property type="entry name" value="SAM_RNA_A_N6_MT"/>
    <property type="match status" value="1"/>
</dbReference>
<evidence type="ECO:0000255" key="1">
    <source>
        <dbReference type="HAMAP-Rule" id="MF_00607"/>
    </source>
</evidence>
<protein>
    <recommendedName>
        <fullName evidence="1">Ribosomal RNA small subunit methyltransferase A</fullName>
        <ecNumber evidence="1">2.1.1.182</ecNumber>
    </recommendedName>
    <alternativeName>
        <fullName evidence="1">16S rRNA (adenine(1518)-N(6)/adenine(1519)-N(6))-dimethyltransferase</fullName>
    </alternativeName>
    <alternativeName>
        <fullName evidence="1">16S rRNA dimethyladenosine transferase</fullName>
    </alternativeName>
    <alternativeName>
        <fullName evidence="1">16S rRNA dimethylase</fullName>
    </alternativeName>
    <alternativeName>
        <fullName evidence="1">S-adenosylmethionine-6-N', N'-adenosyl(rRNA) dimethyltransferase</fullName>
    </alternativeName>
</protein>
<gene>
    <name evidence="1" type="primary">rsmA</name>
    <name evidence="1" type="synonym">ksgA</name>
    <name type="ordered locus">UTI89_C0058</name>
</gene>
<proteinExistence type="inferred from homology"/>
<sequence length="273" mass="30362">MNNRVHQGHLARKRFGQNFLNDQFVIDSIVSAINPQKGQAMVEIGPGLAALTEPVGERLDQLTVIELDRDLAARLQTHPFLGPKLTIYQQDAMTFNFGELAAKMGQPLRVFGNLPYNISTPLMFHLFSYTDAIADMHFMLQKEVVNRLVAGPNSKAYGRLSVMAQYYCNVIPVLEVPPSAFTPPPKVDSAVVRLVPHATMPHPVKDVRVLSRITTEAFNQRRKTIRNSLGNLFSVEVLTGMGIDPAMRAENISVAQYCQMANYLAENAPLQES</sequence>
<organism>
    <name type="scientific">Escherichia coli (strain UTI89 / UPEC)</name>
    <dbReference type="NCBI Taxonomy" id="364106"/>
    <lineage>
        <taxon>Bacteria</taxon>
        <taxon>Pseudomonadati</taxon>
        <taxon>Pseudomonadota</taxon>
        <taxon>Gammaproteobacteria</taxon>
        <taxon>Enterobacterales</taxon>
        <taxon>Enterobacteriaceae</taxon>
        <taxon>Escherichia</taxon>
    </lineage>
</organism>
<feature type="chain" id="PRO_0000257287" description="Ribosomal RNA small subunit methyltransferase A">
    <location>
        <begin position="1"/>
        <end position="273"/>
    </location>
</feature>
<feature type="binding site" evidence="1">
    <location>
        <position position="18"/>
    </location>
    <ligand>
        <name>S-adenosyl-L-methionine</name>
        <dbReference type="ChEBI" id="CHEBI:59789"/>
    </ligand>
</feature>
<feature type="binding site" evidence="1">
    <location>
        <position position="20"/>
    </location>
    <ligand>
        <name>S-adenosyl-L-methionine</name>
        <dbReference type="ChEBI" id="CHEBI:59789"/>
    </ligand>
</feature>
<feature type="binding site" evidence="1">
    <location>
        <position position="45"/>
    </location>
    <ligand>
        <name>S-adenosyl-L-methionine</name>
        <dbReference type="ChEBI" id="CHEBI:59789"/>
    </ligand>
</feature>
<feature type="binding site" evidence="1">
    <location>
        <position position="66"/>
    </location>
    <ligand>
        <name>S-adenosyl-L-methionine</name>
        <dbReference type="ChEBI" id="CHEBI:59789"/>
    </ligand>
</feature>
<feature type="binding site" evidence="1">
    <location>
        <position position="91"/>
    </location>
    <ligand>
        <name>S-adenosyl-L-methionine</name>
        <dbReference type="ChEBI" id="CHEBI:59789"/>
    </ligand>
</feature>
<feature type="binding site" evidence="1">
    <location>
        <position position="113"/>
    </location>
    <ligand>
        <name>S-adenosyl-L-methionine</name>
        <dbReference type="ChEBI" id="CHEBI:59789"/>
    </ligand>
</feature>
<reference key="1">
    <citation type="journal article" date="2006" name="Proc. Natl. Acad. Sci. U.S.A.">
        <title>Identification of genes subject to positive selection in uropathogenic strains of Escherichia coli: a comparative genomics approach.</title>
        <authorList>
            <person name="Chen S.L."/>
            <person name="Hung C.-S."/>
            <person name="Xu J."/>
            <person name="Reigstad C.S."/>
            <person name="Magrini V."/>
            <person name="Sabo A."/>
            <person name="Blasiar D."/>
            <person name="Bieri T."/>
            <person name="Meyer R.R."/>
            <person name="Ozersky P."/>
            <person name="Armstrong J.R."/>
            <person name="Fulton R.S."/>
            <person name="Latreille J.P."/>
            <person name="Spieth J."/>
            <person name="Hooton T.M."/>
            <person name="Mardis E.R."/>
            <person name="Hultgren S.J."/>
            <person name="Gordon J.I."/>
        </authorList>
    </citation>
    <scope>NUCLEOTIDE SEQUENCE [LARGE SCALE GENOMIC DNA]</scope>
    <source>
        <strain>UTI89 / UPEC</strain>
    </source>
</reference>
<accession>Q1RGE6</accession>
<comment type="function">
    <text evidence="1">Specifically dimethylates two adjacent adenosines (A1518 and A1519) in the loop of a conserved hairpin near the 3'-end of 16S rRNA in the 30S particle. May play a critical role in biogenesis of 30S subunits.</text>
</comment>
<comment type="catalytic activity">
    <reaction evidence="1">
        <text>adenosine(1518)/adenosine(1519) in 16S rRNA + 4 S-adenosyl-L-methionine = N(6)-dimethyladenosine(1518)/N(6)-dimethyladenosine(1519) in 16S rRNA + 4 S-adenosyl-L-homocysteine + 4 H(+)</text>
        <dbReference type="Rhea" id="RHEA:19609"/>
        <dbReference type="Rhea" id="RHEA-COMP:10232"/>
        <dbReference type="Rhea" id="RHEA-COMP:10233"/>
        <dbReference type="ChEBI" id="CHEBI:15378"/>
        <dbReference type="ChEBI" id="CHEBI:57856"/>
        <dbReference type="ChEBI" id="CHEBI:59789"/>
        <dbReference type="ChEBI" id="CHEBI:74411"/>
        <dbReference type="ChEBI" id="CHEBI:74493"/>
        <dbReference type="EC" id="2.1.1.182"/>
    </reaction>
</comment>
<comment type="subcellular location">
    <subcellularLocation>
        <location evidence="1">Cytoplasm</location>
    </subcellularLocation>
</comment>
<comment type="similarity">
    <text evidence="1">Belongs to the class I-like SAM-binding methyltransferase superfamily. rRNA adenine N(6)-methyltransferase family. RsmA subfamily.</text>
</comment>
<name>RSMA_ECOUT</name>
<keyword id="KW-0963">Cytoplasm</keyword>
<keyword id="KW-0489">Methyltransferase</keyword>
<keyword id="KW-0694">RNA-binding</keyword>
<keyword id="KW-0698">rRNA processing</keyword>
<keyword id="KW-0949">S-adenosyl-L-methionine</keyword>
<keyword id="KW-0808">Transferase</keyword>